<dbReference type="EC" id="6.1.1.17" evidence="1"/>
<dbReference type="EMBL" id="CP000504">
    <property type="protein sequence ID" value="ABL87549.1"/>
    <property type="molecule type" value="Genomic_DNA"/>
</dbReference>
<dbReference type="RefSeq" id="WP_011762126.1">
    <property type="nucleotide sequence ID" value="NC_008701.1"/>
</dbReference>
<dbReference type="SMR" id="A1RRG7"/>
<dbReference type="STRING" id="384616.Pisl_0371"/>
<dbReference type="GeneID" id="4616813"/>
<dbReference type="KEGG" id="pis:Pisl_0371"/>
<dbReference type="eggNOG" id="arCOG04302">
    <property type="taxonomic scope" value="Archaea"/>
</dbReference>
<dbReference type="HOGENOM" id="CLU_001882_1_3_2"/>
<dbReference type="OrthoDB" id="10470at2157"/>
<dbReference type="Proteomes" id="UP000002595">
    <property type="component" value="Chromosome"/>
</dbReference>
<dbReference type="GO" id="GO:0005829">
    <property type="term" value="C:cytosol"/>
    <property type="evidence" value="ECO:0007669"/>
    <property type="project" value="TreeGrafter"/>
</dbReference>
<dbReference type="GO" id="GO:0005524">
    <property type="term" value="F:ATP binding"/>
    <property type="evidence" value="ECO:0007669"/>
    <property type="project" value="UniProtKB-UniRule"/>
</dbReference>
<dbReference type="GO" id="GO:0004818">
    <property type="term" value="F:glutamate-tRNA ligase activity"/>
    <property type="evidence" value="ECO:0007669"/>
    <property type="project" value="UniProtKB-UniRule"/>
</dbReference>
<dbReference type="GO" id="GO:0043604">
    <property type="term" value="P:amide biosynthetic process"/>
    <property type="evidence" value="ECO:0007669"/>
    <property type="project" value="TreeGrafter"/>
</dbReference>
<dbReference type="GO" id="GO:0006424">
    <property type="term" value="P:glutamyl-tRNA aminoacylation"/>
    <property type="evidence" value="ECO:0007669"/>
    <property type="project" value="UniProtKB-UniRule"/>
</dbReference>
<dbReference type="Gene3D" id="2.40.240.100">
    <property type="match status" value="1"/>
</dbReference>
<dbReference type="Gene3D" id="3.40.50.620">
    <property type="entry name" value="HUPs"/>
    <property type="match status" value="1"/>
</dbReference>
<dbReference type="Gene3D" id="2.40.240.10">
    <property type="entry name" value="Ribosomal Protein L25, Chain P"/>
    <property type="match status" value="1"/>
</dbReference>
<dbReference type="HAMAP" id="MF_02076">
    <property type="entry name" value="Glu_tRNA_synth_type2"/>
    <property type="match status" value="1"/>
</dbReference>
<dbReference type="InterPro" id="IPR050132">
    <property type="entry name" value="Gln/Glu-tRNA_Ligase"/>
</dbReference>
<dbReference type="InterPro" id="IPR004526">
    <property type="entry name" value="Glu-tRNA-synth_arc/euk"/>
</dbReference>
<dbReference type="InterPro" id="IPR000924">
    <property type="entry name" value="Glu/Gln-tRNA-synth"/>
</dbReference>
<dbReference type="InterPro" id="IPR020058">
    <property type="entry name" value="Glu/Gln-tRNA-synth_Ib_cat-dom"/>
</dbReference>
<dbReference type="InterPro" id="IPR020059">
    <property type="entry name" value="Glu/Gln-tRNA-synth_Ib_codon-bd"/>
</dbReference>
<dbReference type="InterPro" id="IPR020056">
    <property type="entry name" value="Rbsml_bL25/Gln-tRNA_synth_N"/>
</dbReference>
<dbReference type="InterPro" id="IPR011035">
    <property type="entry name" value="Ribosomal_bL25/Gln-tRNA_synth"/>
</dbReference>
<dbReference type="InterPro" id="IPR014729">
    <property type="entry name" value="Rossmann-like_a/b/a_fold"/>
</dbReference>
<dbReference type="NCBIfam" id="TIGR00463">
    <property type="entry name" value="gltX_arch"/>
    <property type="match status" value="1"/>
</dbReference>
<dbReference type="NCBIfam" id="NF003169">
    <property type="entry name" value="PRK04156.1"/>
    <property type="match status" value="1"/>
</dbReference>
<dbReference type="PANTHER" id="PTHR43097:SF5">
    <property type="entry name" value="GLUTAMATE--TRNA LIGASE"/>
    <property type="match status" value="1"/>
</dbReference>
<dbReference type="PANTHER" id="PTHR43097">
    <property type="entry name" value="GLUTAMINE-TRNA LIGASE"/>
    <property type="match status" value="1"/>
</dbReference>
<dbReference type="Pfam" id="PF00749">
    <property type="entry name" value="tRNA-synt_1c"/>
    <property type="match status" value="1"/>
</dbReference>
<dbReference type="Pfam" id="PF03950">
    <property type="entry name" value="tRNA-synt_1c_C"/>
    <property type="match status" value="1"/>
</dbReference>
<dbReference type="PRINTS" id="PR00987">
    <property type="entry name" value="TRNASYNTHGLU"/>
</dbReference>
<dbReference type="SUPFAM" id="SSF52374">
    <property type="entry name" value="Nucleotidylyl transferase"/>
    <property type="match status" value="1"/>
</dbReference>
<dbReference type="SUPFAM" id="SSF50715">
    <property type="entry name" value="Ribosomal protein L25-like"/>
    <property type="match status" value="1"/>
</dbReference>
<keyword id="KW-0030">Aminoacyl-tRNA synthetase</keyword>
<keyword id="KW-0067">ATP-binding</keyword>
<keyword id="KW-0963">Cytoplasm</keyword>
<keyword id="KW-0436">Ligase</keyword>
<keyword id="KW-0547">Nucleotide-binding</keyword>
<keyword id="KW-0648">Protein biosynthesis</keyword>
<name>SYE_PYRIL</name>
<proteinExistence type="inferred from homology"/>
<feature type="chain" id="PRO_1000057201" description="Glutamate--tRNA ligase">
    <location>
        <begin position="1"/>
        <end position="570"/>
    </location>
</feature>
<feature type="short sequence motif" description="'HIGH' region" evidence="1">
    <location>
        <begin position="107"/>
        <end position="117"/>
    </location>
</feature>
<protein>
    <recommendedName>
        <fullName evidence="1">Glutamate--tRNA ligase</fullName>
        <ecNumber evidence="1">6.1.1.17</ecNumber>
    </recommendedName>
    <alternativeName>
        <fullName evidence="1">Glutamyl-tRNA synthetase</fullName>
        <shortName evidence="1">GluRS</shortName>
    </alternativeName>
</protein>
<reference key="1">
    <citation type="submission" date="2006-12" db="EMBL/GenBank/DDBJ databases">
        <title>Complete sequence of Pyrobaculum islandicum DSM 4184.</title>
        <authorList>
            <person name="Copeland A."/>
            <person name="Lucas S."/>
            <person name="Lapidus A."/>
            <person name="Barry K."/>
            <person name="Detter J.C."/>
            <person name="Glavina del Rio T."/>
            <person name="Dalin E."/>
            <person name="Tice H."/>
            <person name="Pitluck S."/>
            <person name="Meincke L."/>
            <person name="Brettin T."/>
            <person name="Bruce D."/>
            <person name="Han C."/>
            <person name="Tapia R."/>
            <person name="Gilna P."/>
            <person name="Schmutz J."/>
            <person name="Larimer F."/>
            <person name="Land M."/>
            <person name="Hauser L."/>
            <person name="Kyrpides N."/>
            <person name="Mikhailova N."/>
            <person name="Cozen A.E."/>
            <person name="Fitz-Gibbon S.T."/>
            <person name="House C.H."/>
            <person name="Saltikov C."/>
            <person name="Lowe T."/>
            <person name="Richardson P."/>
        </authorList>
    </citation>
    <scope>NUCLEOTIDE SEQUENCE [LARGE SCALE GENOMIC DNA]</scope>
    <source>
        <strain>DSM 4184 / JCM 9189 / GEO3</strain>
    </source>
</reference>
<organism>
    <name type="scientific">Pyrobaculum islandicum (strain DSM 4184 / JCM 9189 / GEO3)</name>
    <dbReference type="NCBI Taxonomy" id="384616"/>
    <lineage>
        <taxon>Archaea</taxon>
        <taxon>Thermoproteota</taxon>
        <taxon>Thermoprotei</taxon>
        <taxon>Thermoproteales</taxon>
        <taxon>Thermoproteaceae</taxon>
        <taxon>Pyrobaculum</taxon>
    </lineage>
</organism>
<evidence type="ECO:0000255" key="1">
    <source>
        <dbReference type="HAMAP-Rule" id="MF_02076"/>
    </source>
</evidence>
<gene>
    <name evidence="1" type="primary">gltX</name>
    <name type="ordered locus">Pisl_0371</name>
</gene>
<sequence length="570" mass="65108">MNLEELVLKYALANAVKYGGKADVKAVMSKIMAEVPELRPKAREVKSMVEAVVARVNSMSLEEQLRLLRERWPETLEERRVEQKRPGIENLAELPNVKGGVVVRFAPNPDFVLHLGSARPAILNYAYRLKYGGKFILRFEDTDPRTKKPLVTSEINAYETIREDLKWLGIKWDEEYIQSMRMEIYYEHIKKLLEKGAAYVDLCRPEEWRKLRNAGRACPHREQSPEENLELWDRMLEGRFKEGEAVVRIKTDLSHPDPSVRDWVAFRIIDTSKTPHPLVGDKYIVWPTYNFAVSIDDHLMGITHVLRAQEHSVNTIKQSYIFKHFGWEQPVTIHFGRLKIEGASLSKSKLKALGVRYDDISLPTLAGLRNRGILPEAIWELILTVGVKPSDSTIALSNLFALNRKRIEPIANRYMYVADPIKLVFKSDRELLAKIPLHPSFRERGERIYKFGPGTIELFVPRQDIKPGAVVRLMELANVEIIAVENGVAHGRLHSVGIDEARKVGAPIIQWVYEPIEIHVVKPVAVGKKVEEIGLGESALEKVETGAYVQFMRYGFLKKVGPSAFVYVHD</sequence>
<comment type="function">
    <text evidence="1">Catalyzes the attachment of glutamate to tRNA(Glu) in a two-step reaction: glutamate is first activated by ATP to form Glu-AMP and then transferred to the acceptor end of tRNA(Glu).</text>
</comment>
<comment type="catalytic activity">
    <reaction evidence="1">
        <text>tRNA(Glu) + L-glutamate + ATP = L-glutamyl-tRNA(Glu) + AMP + diphosphate</text>
        <dbReference type="Rhea" id="RHEA:23540"/>
        <dbReference type="Rhea" id="RHEA-COMP:9663"/>
        <dbReference type="Rhea" id="RHEA-COMP:9680"/>
        <dbReference type="ChEBI" id="CHEBI:29985"/>
        <dbReference type="ChEBI" id="CHEBI:30616"/>
        <dbReference type="ChEBI" id="CHEBI:33019"/>
        <dbReference type="ChEBI" id="CHEBI:78442"/>
        <dbReference type="ChEBI" id="CHEBI:78520"/>
        <dbReference type="ChEBI" id="CHEBI:456215"/>
        <dbReference type="EC" id="6.1.1.17"/>
    </reaction>
</comment>
<comment type="subcellular location">
    <subcellularLocation>
        <location evidence="1">Cytoplasm</location>
    </subcellularLocation>
</comment>
<comment type="similarity">
    <text evidence="1">Belongs to the class-I aminoacyl-tRNA synthetase family. Glutamate--tRNA ligase type 2 subfamily.</text>
</comment>
<accession>A1RRG7</accession>